<reference key="1">
    <citation type="submission" date="2004-07" db="EMBL/GenBank/DDBJ databases">
        <title>Cloning and analyzing of a new chaC like cDNA from human kidney.</title>
        <authorList>
            <person name="Zheng J.M."/>
            <person name="Liu Z.H."/>
            <person name="Li L.S."/>
        </authorList>
    </citation>
    <scope>NUCLEOTIDE SEQUENCE [MRNA] (ISOFORM 2)</scope>
</reference>
<reference key="2">
    <citation type="journal article" date="2006" name="Nature">
        <title>Analysis of the DNA sequence and duplication history of human chromosome 15.</title>
        <authorList>
            <person name="Zody M.C."/>
            <person name="Garber M."/>
            <person name="Sharpe T."/>
            <person name="Young S.K."/>
            <person name="Rowen L."/>
            <person name="O'Neill K."/>
            <person name="Whittaker C.A."/>
            <person name="Kamal M."/>
            <person name="Chang J.L."/>
            <person name="Cuomo C.A."/>
            <person name="Dewar K."/>
            <person name="FitzGerald M.G."/>
            <person name="Kodira C.D."/>
            <person name="Madan A."/>
            <person name="Qin S."/>
            <person name="Yang X."/>
            <person name="Abbasi N."/>
            <person name="Abouelleil A."/>
            <person name="Arachchi H.M."/>
            <person name="Baradarani L."/>
            <person name="Birditt B."/>
            <person name="Bloom S."/>
            <person name="Bloom T."/>
            <person name="Borowsky M.L."/>
            <person name="Burke J."/>
            <person name="Butler J."/>
            <person name="Cook A."/>
            <person name="DeArellano K."/>
            <person name="DeCaprio D."/>
            <person name="Dorris L. III"/>
            <person name="Dors M."/>
            <person name="Eichler E.E."/>
            <person name="Engels R."/>
            <person name="Fahey J."/>
            <person name="Fleetwood P."/>
            <person name="Friedman C."/>
            <person name="Gearin G."/>
            <person name="Hall J.L."/>
            <person name="Hensley G."/>
            <person name="Johnson E."/>
            <person name="Jones C."/>
            <person name="Kamat A."/>
            <person name="Kaur A."/>
            <person name="Locke D.P."/>
            <person name="Madan A."/>
            <person name="Munson G."/>
            <person name="Jaffe D.B."/>
            <person name="Lui A."/>
            <person name="Macdonald P."/>
            <person name="Mauceli E."/>
            <person name="Naylor J.W."/>
            <person name="Nesbitt R."/>
            <person name="Nicol R."/>
            <person name="O'Leary S.B."/>
            <person name="Ratcliffe A."/>
            <person name="Rounsley S."/>
            <person name="She X."/>
            <person name="Sneddon K.M.B."/>
            <person name="Stewart S."/>
            <person name="Sougnez C."/>
            <person name="Stone S.M."/>
            <person name="Topham K."/>
            <person name="Vincent D."/>
            <person name="Wang S."/>
            <person name="Zimmer A.R."/>
            <person name="Birren B.W."/>
            <person name="Hood L."/>
            <person name="Lander E.S."/>
            <person name="Nusbaum C."/>
        </authorList>
    </citation>
    <scope>NUCLEOTIDE SEQUENCE [LARGE SCALE GENOMIC DNA]</scope>
</reference>
<reference key="3">
    <citation type="journal article" date="2004" name="Genome Res.">
        <title>The status, quality, and expansion of the NIH full-length cDNA project: the Mammalian Gene Collection (MGC).</title>
        <authorList>
            <consortium name="The MGC Project Team"/>
        </authorList>
    </citation>
    <scope>NUCLEOTIDE SEQUENCE [LARGE SCALE MRNA] (ISOFORM 1)</scope>
    <source>
        <tissue>Liver</tissue>
        <tissue>Muscle</tissue>
    </source>
</reference>
<reference key="4">
    <citation type="journal article" date="2009" name="J. Immunol.">
        <title>CHAC1/MGC4504 is a novel proapoptotic component of the unfolded protein response, downstream of the ATF4-ATF3-CHOP cascade.</title>
        <authorList>
            <person name="Mungrue I.N."/>
            <person name="Pagnon J."/>
            <person name="Kohannim O."/>
            <person name="Gargalovic P.S."/>
            <person name="Lusis A.J."/>
        </authorList>
    </citation>
    <scope>FUNCTION</scope>
    <scope>INDUCTION</scope>
    <scope>SUBCELLULAR LOCATION</scope>
</reference>
<reference key="5">
    <citation type="journal article" date="2012" name="Dev. Cell">
        <title>Botch promotes neurogenesis by antagonizing Notch.</title>
        <authorList>
            <person name="Chi Z."/>
            <person name="Zhang J."/>
            <person name="Tokunaga A."/>
            <person name="Harraz M.M."/>
            <person name="Byrne S.T."/>
            <person name="Dolinko A."/>
            <person name="Xu J."/>
            <person name="Blackshaw S."/>
            <person name="Gaiano N."/>
            <person name="Dawson T.M."/>
            <person name="Dawson V.L."/>
        </authorList>
    </citation>
    <scope>FUNCTION</scope>
</reference>
<reference key="6">
    <citation type="journal article" date="2017" name="J. Biol. Chem.">
        <title>ChaC2, an enzyme for slow turnover of cytosolic glutathione.</title>
        <authorList>
            <person name="Kaur A."/>
            <person name="Gautam R."/>
            <person name="Srivastava R."/>
            <person name="Chandel A."/>
            <person name="Kumar A."/>
            <person name="Karthikeyan S."/>
            <person name="Bachhawat A.K."/>
        </authorList>
    </citation>
    <scope>FUNCTION</scope>
    <scope>CATALYTIC ACTIVITY</scope>
    <scope>BIOPHYSICOCHEMICAL PROPERTIES</scope>
</reference>
<comment type="function">
    <text evidence="4 5 6">Catalyzes the cleavage of glutathione into 5-oxo-L-proline and a Cys-Gly dipeptide. Acts specifically on glutathione, but not on other gamma-glutamyl peptides (PubMed:27913623). Glutathione depletion is an important factor for apoptosis initiation and execution. Acts as a pro-apoptotic component of the unfolded protein response pathway by mediating the pro-apoptotic effects of the ATF4-ATF3-DDIT3/CHOP cascade (PubMed:19109178). Negative regulator of Notch signaling pathway involved in embryonic neurogenesis: acts by inhibiting Notch cleavage by furin, maintaining Notch in an immature inactive form, thereby promoting neurogenesis in embryos (PubMed:22445366).</text>
</comment>
<comment type="catalytic activity">
    <reaction evidence="6">
        <text>glutathione = L-cysteinylglycine + 5-oxo-L-proline</text>
        <dbReference type="Rhea" id="RHEA:47724"/>
        <dbReference type="ChEBI" id="CHEBI:57925"/>
        <dbReference type="ChEBI" id="CHEBI:58402"/>
        <dbReference type="ChEBI" id="CHEBI:61694"/>
        <dbReference type="EC" id="4.3.2.7"/>
    </reaction>
</comment>
<comment type="biophysicochemical properties">
    <kinetics>
        <KM evidence="6">2.2 mM for glutathione</KM>
        <text evidence="6">kcat is 225.2 min(-1) for glutathione.</text>
    </kinetics>
</comment>
<comment type="subunit">
    <text evidence="2">Interacts with NOTCH1 (via extracellular region).</text>
</comment>
<comment type="interaction">
    <interactant intactId="EBI-751127">
        <id>Q9BUX1</id>
    </interactant>
    <interactant intactId="EBI-372094">
        <id>Q9BQY4</id>
        <label>RHOXF2</label>
    </interactant>
    <organismsDiffer>false</organismsDiffer>
    <experiments>2</experiments>
</comment>
<comment type="subcellular location">
    <subcellularLocation>
        <location evidence="4">Cytoplasm</location>
        <location evidence="4">Cytosol</location>
    </subcellularLocation>
    <subcellularLocation>
        <location evidence="2">Golgi apparatus</location>
        <location evidence="2">trans-Golgi network</location>
    </subcellularLocation>
</comment>
<comment type="alternative products">
    <event type="alternative splicing"/>
    <isoform>
        <id>Q9BUX1-1</id>
        <name>1</name>
        <sequence type="displayed"/>
    </isoform>
    <isoform>
        <id>Q9BUX1-2</id>
        <name>2</name>
        <sequence type="described" ref="VSP_038960"/>
    </isoform>
</comment>
<comment type="induction">
    <text evidence="4">Induced by chemical activators of the unfolded protein response (UPR) such as tunicamycin, DTT and thapsigargin.</text>
</comment>
<comment type="similarity">
    <text evidence="11">Belongs to the gamma-glutamylcyclotransferase family. ChaC subfamily.</text>
</comment>
<proteinExistence type="evidence at protein level"/>
<protein>
    <recommendedName>
        <fullName evidence="9">Glutathione-specific gamma-glutamylcyclotransferase 1</fullName>
        <shortName evidence="9">Gamma-GCG 1</shortName>
        <ecNumber evidence="6">4.3.2.7</ecNumber>
    </recommendedName>
    <alternativeName>
        <fullName evidence="8">Blocks Notch protein</fullName>
        <shortName evidence="8">Botch</shortName>
    </alternativeName>
    <alternativeName>
        <fullName evidence="7">Cation transport regulator-like protein 1</fullName>
    </alternativeName>
</protein>
<gene>
    <name evidence="7 12" type="primary">CHAC1</name>
    <name evidence="8" type="synonym">BOTCH</name>
</gene>
<organism>
    <name type="scientific">Homo sapiens</name>
    <name type="common">Human</name>
    <dbReference type="NCBI Taxonomy" id="9606"/>
    <lineage>
        <taxon>Eukaryota</taxon>
        <taxon>Metazoa</taxon>
        <taxon>Chordata</taxon>
        <taxon>Craniata</taxon>
        <taxon>Vertebrata</taxon>
        <taxon>Euteleostomi</taxon>
        <taxon>Mammalia</taxon>
        <taxon>Eutheria</taxon>
        <taxon>Euarchontoglires</taxon>
        <taxon>Primates</taxon>
        <taxon>Haplorrhini</taxon>
        <taxon>Catarrhini</taxon>
        <taxon>Hominidae</taxon>
        <taxon>Homo</taxon>
    </lineage>
</organism>
<keyword id="KW-0025">Alternative splicing</keyword>
<keyword id="KW-0053">Apoptosis</keyword>
<keyword id="KW-0963">Cytoplasm</keyword>
<keyword id="KW-0333">Golgi apparatus</keyword>
<keyword id="KW-0456">Lyase</keyword>
<keyword id="KW-0524">Neurogenesis</keyword>
<keyword id="KW-0914">Notch signaling pathway</keyword>
<keyword id="KW-1267">Proteomics identification</keyword>
<keyword id="KW-1185">Reference proteome</keyword>
<keyword id="KW-0834">Unfolded protein response</keyword>
<evidence type="ECO:0000250" key="1">
    <source>
        <dbReference type="UniProtKB" id="O75223"/>
    </source>
</evidence>
<evidence type="ECO:0000250" key="2">
    <source>
        <dbReference type="UniProtKB" id="Q8R3J5"/>
    </source>
</evidence>
<evidence type="ECO:0000256" key="3">
    <source>
        <dbReference type="SAM" id="MobiDB-lite"/>
    </source>
</evidence>
<evidence type="ECO:0000269" key="4">
    <source>
    </source>
</evidence>
<evidence type="ECO:0000269" key="5">
    <source>
    </source>
</evidence>
<evidence type="ECO:0000269" key="6">
    <source>
    </source>
</evidence>
<evidence type="ECO:0000303" key="7">
    <source>
    </source>
</evidence>
<evidence type="ECO:0000303" key="8">
    <source>
    </source>
</evidence>
<evidence type="ECO:0000303" key="9">
    <source>
    </source>
</evidence>
<evidence type="ECO:0000303" key="10">
    <source ref="1"/>
</evidence>
<evidence type="ECO:0000305" key="11"/>
<evidence type="ECO:0000312" key="12">
    <source>
        <dbReference type="HGNC" id="HGNC:28680"/>
    </source>
</evidence>
<accession>Q9BUX1</accession>
<accession>Q0VIA0</accession>
<sequence>MKQESAAPNTPPTSQSPTPSAQFPRNDGDPQALWIFGYGSLVWRPDFAYSDSRVGFVRGYSRRFWQGDTFHRGSDKMPGRVVTLLEDHEGCTWGVAYQVQGEQVSKALKYLNVREAVLGGYDTKEVTFYPQDAPDQPLKALAYVATPQNPGYLGPAPEEAIATQILACRGFSGHNLEYLLRLADFMQLCGPQAQDEHLAAIVDAVGTMLPCFCPTEQALALV</sequence>
<feature type="chain" id="PRO_0000239010" description="Glutathione-specific gamma-glutamylcyclotransferase 1">
    <location>
        <begin position="1"/>
        <end position="222"/>
    </location>
</feature>
<feature type="region of interest" description="Disordered" evidence="3">
    <location>
        <begin position="1"/>
        <end position="24"/>
    </location>
</feature>
<feature type="compositionally biased region" description="Low complexity" evidence="3">
    <location>
        <begin position="1"/>
        <end position="22"/>
    </location>
</feature>
<feature type="active site" description="Proton acceptor" evidence="1">
    <location>
        <position position="115"/>
    </location>
</feature>
<feature type="binding site" evidence="1">
    <location>
        <begin position="35"/>
        <end position="40"/>
    </location>
    <ligand>
        <name>substrate</name>
    </ligand>
</feature>
<feature type="splice variant" id="VSP_038960" description="In isoform 2." evidence="10">
    <location>
        <begin position="104"/>
        <end position="148"/>
    </location>
</feature>
<feature type="sequence conflict" description="In Ref. 1; AAW23972." evidence="11" ref="1">
    <original>P</original>
    <variation>H</variation>
    <location>
        <position position="17"/>
    </location>
</feature>
<name>CHAC1_HUMAN</name>
<dbReference type="EC" id="4.3.2.7" evidence="6"/>
<dbReference type="EMBL" id="AY702027">
    <property type="protein sequence ID" value="AAW23972.1"/>
    <property type="molecule type" value="mRNA"/>
</dbReference>
<dbReference type="EMBL" id="AC020661">
    <property type="status" value="NOT_ANNOTATED_CDS"/>
    <property type="molecule type" value="Genomic_DNA"/>
</dbReference>
<dbReference type="EMBL" id="BC001683">
    <property type="protein sequence ID" value="AAH01683.1"/>
    <property type="molecule type" value="mRNA"/>
</dbReference>
<dbReference type="EMBL" id="BC001847">
    <property type="protein sequence ID" value="AAH01847.1"/>
    <property type="molecule type" value="mRNA"/>
</dbReference>
<dbReference type="EMBL" id="BC019625">
    <property type="protein sequence ID" value="AAH19625.1"/>
    <property type="molecule type" value="mRNA"/>
</dbReference>
<dbReference type="CCDS" id="CCDS10070.3">
    <molecule id="Q9BUX1-1"/>
</dbReference>
<dbReference type="CCDS" id="CCDS45233.2">
    <molecule id="Q9BUX1-2"/>
</dbReference>
<dbReference type="RefSeq" id="NP_001136248.2">
    <molecule id="Q9BUX1-2"/>
    <property type="nucleotide sequence ID" value="NM_001142776.4"/>
</dbReference>
<dbReference type="RefSeq" id="NP_077016.3">
    <molecule id="Q9BUX1-1"/>
    <property type="nucleotide sequence ID" value="NM_024111.6"/>
</dbReference>
<dbReference type="SMR" id="Q9BUX1"/>
<dbReference type="BioGRID" id="122541">
    <property type="interactions" value="7"/>
</dbReference>
<dbReference type="FunCoup" id="Q9BUX1">
    <property type="interactions" value="548"/>
</dbReference>
<dbReference type="IntAct" id="Q9BUX1">
    <property type="interactions" value="3"/>
</dbReference>
<dbReference type="STRING" id="9606.ENSP00000484644"/>
<dbReference type="GlyGen" id="Q9BUX1">
    <property type="glycosylation" value="1 site"/>
</dbReference>
<dbReference type="iPTMnet" id="Q9BUX1"/>
<dbReference type="PhosphoSitePlus" id="Q9BUX1"/>
<dbReference type="BioMuta" id="CHAC1"/>
<dbReference type="DMDM" id="294862423"/>
<dbReference type="MassIVE" id="Q9BUX1"/>
<dbReference type="PaxDb" id="9606-ENSP00000398105"/>
<dbReference type="PeptideAtlas" id="Q9BUX1"/>
<dbReference type="ProteomicsDB" id="79141">
    <molecule id="Q9BUX1-1"/>
</dbReference>
<dbReference type="ProteomicsDB" id="79142">
    <molecule id="Q9BUX1-2"/>
</dbReference>
<dbReference type="Pumba" id="Q9BUX1"/>
<dbReference type="ABCD" id="Q9BUX1">
    <property type="antibodies" value="1 sequenced antibody"/>
</dbReference>
<dbReference type="Antibodypedia" id="23207">
    <property type="antibodies" value="311 antibodies from 28 providers"/>
</dbReference>
<dbReference type="DNASU" id="79094"/>
<dbReference type="Ensembl" id="ENST00000444189.7">
    <molecule id="Q9BUX1-2"/>
    <property type="protein sequence ID" value="ENSP00000395466.3"/>
    <property type="gene ID" value="ENSG00000128965.13"/>
</dbReference>
<dbReference type="Ensembl" id="ENST00000617768.5">
    <molecule id="Q9BUX1-1"/>
    <property type="protein sequence ID" value="ENSP00000484644.2"/>
    <property type="gene ID" value="ENSG00000128965.13"/>
</dbReference>
<dbReference type="GeneID" id="79094"/>
<dbReference type="KEGG" id="hsa:79094"/>
<dbReference type="MANE-Select" id="ENST00000617768.5">
    <property type="protein sequence ID" value="ENSP00000484644.2"/>
    <property type="RefSeq nucleotide sequence ID" value="NM_024111.6"/>
    <property type="RefSeq protein sequence ID" value="NP_077016.3"/>
</dbReference>
<dbReference type="UCSC" id="uc001znh.2">
    <molecule id="Q9BUX1-1"/>
    <property type="organism name" value="human"/>
</dbReference>
<dbReference type="AGR" id="HGNC:28680"/>
<dbReference type="CTD" id="79094"/>
<dbReference type="DisGeNET" id="79094"/>
<dbReference type="GeneCards" id="CHAC1"/>
<dbReference type="HGNC" id="HGNC:28680">
    <property type="gene designation" value="CHAC1"/>
</dbReference>
<dbReference type="HPA" id="ENSG00000128965">
    <property type="expression patterns" value="Tissue enhanced (pancreas, skeletal muscle)"/>
</dbReference>
<dbReference type="MalaCards" id="CHAC1"/>
<dbReference type="MIM" id="614587">
    <property type="type" value="gene"/>
</dbReference>
<dbReference type="neXtProt" id="NX_Q9BUX1"/>
<dbReference type="OpenTargets" id="ENSG00000128965"/>
<dbReference type="PharmGKB" id="PA142672119"/>
<dbReference type="VEuPathDB" id="HostDB:ENSG00000128965"/>
<dbReference type="eggNOG" id="KOG3182">
    <property type="taxonomic scope" value="Eukaryota"/>
</dbReference>
<dbReference type="GeneTree" id="ENSGT00390000003855"/>
<dbReference type="HOGENOM" id="CLU_070703_2_2_1"/>
<dbReference type="InParanoid" id="Q9BUX1"/>
<dbReference type="OMA" id="HRALKMW"/>
<dbReference type="OrthoDB" id="1933483at2759"/>
<dbReference type="PAN-GO" id="Q9BUX1">
    <property type="GO annotations" value="3 GO annotations based on evolutionary models"/>
</dbReference>
<dbReference type="PhylomeDB" id="Q9BUX1"/>
<dbReference type="TreeFam" id="TF313048"/>
<dbReference type="BioCyc" id="MetaCyc:ENSG00000128965-MONOMER"/>
<dbReference type="PathwayCommons" id="Q9BUX1"/>
<dbReference type="Reactome" id="R-HSA-174403">
    <property type="pathway name" value="Glutathione synthesis and recycling"/>
</dbReference>
<dbReference type="Reactome" id="R-HSA-9648895">
    <property type="pathway name" value="Response of EIF2AK1 (HRI) to heme deficiency"/>
</dbReference>
<dbReference type="SignaLink" id="Q9BUX1"/>
<dbReference type="BioGRID-ORCS" id="79094">
    <property type="hits" value="10 hits in 1149 CRISPR screens"/>
</dbReference>
<dbReference type="ChiTaRS" id="CHAC1">
    <property type="organism name" value="human"/>
</dbReference>
<dbReference type="GenomeRNAi" id="79094"/>
<dbReference type="Pharos" id="Q9BUX1">
    <property type="development level" value="Tbio"/>
</dbReference>
<dbReference type="PRO" id="PR:Q9BUX1"/>
<dbReference type="Proteomes" id="UP000005640">
    <property type="component" value="Chromosome 15"/>
</dbReference>
<dbReference type="RNAct" id="Q9BUX1">
    <property type="molecule type" value="protein"/>
</dbReference>
<dbReference type="Bgee" id="ENSG00000128965">
    <property type="expression patterns" value="Expressed in gastrocnemius and 148 other cell types or tissues"/>
</dbReference>
<dbReference type="ExpressionAtlas" id="Q9BUX1">
    <property type="expression patterns" value="baseline and differential"/>
</dbReference>
<dbReference type="GO" id="GO:0005737">
    <property type="term" value="C:cytoplasm"/>
    <property type="evidence" value="ECO:0000318"/>
    <property type="project" value="GO_Central"/>
</dbReference>
<dbReference type="GO" id="GO:0005829">
    <property type="term" value="C:cytosol"/>
    <property type="evidence" value="ECO:0000314"/>
    <property type="project" value="UniProtKB"/>
</dbReference>
<dbReference type="GO" id="GO:0005802">
    <property type="term" value="C:trans-Golgi network"/>
    <property type="evidence" value="ECO:0000250"/>
    <property type="project" value="UniProtKB"/>
</dbReference>
<dbReference type="GO" id="GO:0003839">
    <property type="term" value="F:gamma-glutamylcyclotransferase activity"/>
    <property type="evidence" value="ECO:0000304"/>
    <property type="project" value="Reactome"/>
</dbReference>
<dbReference type="GO" id="GO:0061928">
    <property type="term" value="F:glutathione specific gamma-glutamylcyclotransferase activity"/>
    <property type="evidence" value="ECO:0000314"/>
    <property type="project" value="FlyBase"/>
</dbReference>
<dbReference type="GO" id="GO:0005112">
    <property type="term" value="F:Notch binding"/>
    <property type="evidence" value="ECO:0000250"/>
    <property type="project" value="UniProtKB"/>
</dbReference>
<dbReference type="GO" id="GO:0006750">
    <property type="term" value="P:glutathione biosynthetic process"/>
    <property type="evidence" value="ECO:0000304"/>
    <property type="project" value="Reactome"/>
</dbReference>
<dbReference type="GO" id="GO:0006751">
    <property type="term" value="P:glutathione catabolic process"/>
    <property type="evidence" value="ECO:0000318"/>
    <property type="project" value="GO_Central"/>
</dbReference>
<dbReference type="GO" id="GO:0070059">
    <property type="term" value="P:intrinsic apoptotic signaling pathway in response to endoplasmic reticulum stress"/>
    <property type="evidence" value="ECO:0000315"/>
    <property type="project" value="UniProtKB"/>
</dbReference>
<dbReference type="GO" id="GO:0045746">
    <property type="term" value="P:negative regulation of Notch signaling pathway"/>
    <property type="evidence" value="ECO:0000315"/>
    <property type="project" value="UniProtKB"/>
</dbReference>
<dbReference type="GO" id="GO:0010955">
    <property type="term" value="P:negative regulation of protein processing"/>
    <property type="evidence" value="ECO:0000315"/>
    <property type="project" value="UniProtKB"/>
</dbReference>
<dbReference type="GO" id="GO:0022008">
    <property type="term" value="P:neurogenesis"/>
    <property type="evidence" value="ECO:0000250"/>
    <property type="project" value="UniProtKB"/>
</dbReference>
<dbReference type="GO" id="GO:0007219">
    <property type="term" value="P:Notch signaling pathway"/>
    <property type="evidence" value="ECO:0007669"/>
    <property type="project" value="UniProtKB-KW"/>
</dbReference>
<dbReference type="GO" id="GO:0006986">
    <property type="term" value="P:response to unfolded protein"/>
    <property type="evidence" value="ECO:0007669"/>
    <property type="project" value="UniProtKB-KW"/>
</dbReference>
<dbReference type="CDD" id="cd06661">
    <property type="entry name" value="GGCT_like"/>
    <property type="match status" value="1"/>
</dbReference>
<dbReference type="FunFam" id="3.10.490.10:FF:000005">
    <property type="entry name" value="Gamma-glutamylcyclotransferase"/>
    <property type="match status" value="1"/>
</dbReference>
<dbReference type="Gene3D" id="3.10.490.10">
    <property type="entry name" value="Gamma-glutamyl cyclotransferase-like"/>
    <property type="match status" value="1"/>
</dbReference>
<dbReference type="InterPro" id="IPR006840">
    <property type="entry name" value="ChaC"/>
</dbReference>
<dbReference type="InterPro" id="IPR013024">
    <property type="entry name" value="GGCT-like"/>
</dbReference>
<dbReference type="InterPro" id="IPR036568">
    <property type="entry name" value="GGCT-like_sf"/>
</dbReference>
<dbReference type="PANTHER" id="PTHR12192">
    <property type="entry name" value="CATION TRANSPORT PROTEIN CHAC-RELATED"/>
    <property type="match status" value="1"/>
</dbReference>
<dbReference type="PANTHER" id="PTHR12192:SF26">
    <property type="entry name" value="GLUTATHIONE-SPECIFIC GAMMA-GLUTAMYLCYCLOTRANSFERASE 1"/>
    <property type="match status" value="1"/>
</dbReference>
<dbReference type="Pfam" id="PF04752">
    <property type="entry name" value="ChaC"/>
    <property type="match status" value="1"/>
</dbReference>
<dbReference type="SUPFAM" id="SSF110857">
    <property type="entry name" value="Gamma-glutamyl cyclotransferase-like"/>
    <property type="match status" value="1"/>
</dbReference>